<dbReference type="EC" id="3.4.23.36" evidence="1"/>
<dbReference type="EMBL" id="CP001096">
    <property type="protein sequence ID" value="ACF03349.1"/>
    <property type="molecule type" value="Genomic_DNA"/>
</dbReference>
<dbReference type="RefSeq" id="WP_012497576.1">
    <property type="nucleotide sequence ID" value="NC_011004.1"/>
</dbReference>
<dbReference type="SMR" id="B3Q7Z4"/>
<dbReference type="KEGG" id="rpt:Rpal_4860"/>
<dbReference type="HOGENOM" id="CLU_083252_4_3_5"/>
<dbReference type="OrthoDB" id="9810259at2"/>
<dbReference type="UniPathway" id="UPA00665"/>
<dbReference type="Proteomes" id="UP000001725">
    <property type="component" value="Chromosome"/>
</dbReference>
<dbReference type="GO" id="GO:0005886">
    <property type="term" value="C:plasma membrane"/>
    <property type="evidence" value="ECO:0007669"/>
    <property type="project" value="UniProtKB-SubCell"/>
</dbReference>
<dbReference type="GO" id="GO:0004190">
    <property type="term" value="F:aspartic-type endopeptidase activity"/>
    <property type="evidence" value="ECO:0007669"/>
    <property type="project" value="UniProtKB-UniRule"/>
</dbReference>
<dbReference type="GO" id="GO:0006508">
    <property type="term" value="P:proteolysis"/>
    <property type="evidence" value="ECO:0007669"/>
    <property type="project" value="UniProtKB-KW"/>
</dbReference>
<dbReference type="HAMAP" id="MF_00161">
    <property type="entry name" value="LspA"/>
    <property type="match status" value="1"/>
</dbReference>
<dbReference type="InterPro" id="IPR001872">
    <property type="entry name" value="Peptidase_A8"/>
</dbReference>
<dbReference type="NCBIfam" id="TIGR00077">
    <property type="entry name" value="lspA"/>
    <property type="match status" value="1"/>
</dbReference>
<dbReference type="PANTHER" id="PTHR33695">
    <property type="entry name" value="LIPOPROTEIN SIGNAL PEPTIDASE"/>
    <property type="match status" value="1"/>
</dbReference>
<dbReference type="PANTHER" id="PTHR33695:SF1">
    <property type="entry name" value="LIPOPROTEIN SIGNAL PEPTIDASE"/>
    <property type="match status" value="1"/>
</dbReference>
<dbReference type="Pfam" id="PF01252">
    <property type="entry name" value="Peptidase_A8"/>
    <property type="match status" value="1"/>
</dbReference>
<dbReference type="PRINTS" id="PR00781">
    <property type="entry name" value="LIPOSIGPTASE"/>
</dbReference>
<dbReference type="PROSITE" id="PS00855">
    <property type="entry name" value="SPASE_II"/>
    <property type="match status" value="1"/>
</dbReference>
<comment type="function">
    <text evidence="1">This protein specifically catalyzes the removal of signal peptides from prolipoproteins.</text>
</comment>
<comment type="catalytic activity">
    <reaction evidence="1">
        <text>Release of signal peptides from bacterial membrane prolipoproteins. Hydrolyzes -Xaa-Yaa-Zaa-|-(S,diacylglyceryl)Cys-, in which Xaa is hydrophobic (preferably Leu), and Yaa (Ala or Ser) and Zaa (Gly or Ala) have small, neutral side chains.</text>
        <dbReference type="EC" id="3.4.23.36"/>
    </reaction>
</comment>
<comment type="pathway">
    <text evidence="1">Protein modification; lipoprotein biosynthesis (signal peptide cleavage).</text>
</comment>
<comment type="subcellular location">
    <subcellularLocation>
        <location evidence="1">Cell inner membrane</location>
        <topology evidence="1">Multi-pass membrane protein</topology>
    </subcellularLocation>
</comment>
<comment type="similarity">
    <text evidence="1">Belongs to the peptidase A8 family.</text>
</comment>
<sequence length="164" mass="17341">MTPVRLGILTAVIALALDQATKLWLLYGFELARKGVVPVTSFFDLVLAWNTGISYGWFAGQGPTGQILMLAFKAVAIVALAIWMARSTTKLATIGLGLIIGGAIGNAIDRLAYGAVVDFALFHVEIAGKTYNWYVFNIADVAIVVGVVALLYDSLIGAPAVKAP</sequence>
<keyword id="KW-0064">Aspartyl protease</keyword>
<keyword id="KW-0997">Cell inner membrane</keyword>
<keyword id="KW-1003">Cell membrane</keyword>
<keyword id="KW-0378">Hydrolase</keyword>
<keyword id="KW-0472">Membrane</keyword>
<keyword id="KW-0645">Protease</keyword>
<keyword id="KW-0812">Transmembrane</keyword>
<keyword id="KW-1133">Transmembrane helix</keyword>
<protein>
    <recommendedName>
        <fullName evidence="1">Lipoprotein signal peptidase</fullName>
        <ecNumber evidence="1">3.4.23.36</ecNumber>
    </recommendedName>
    <alternativeName>
        <fullName evidence="1">Prolipoprotein signal peptidase</fullName>
    </alternativeName>
    <alternativeName>
        <fullName evidence="1">Signal peptidase II</fullName>
        <shortName evidence="1">SPase II</shortName>
    </alternativeName>
</protein>
<accession>B3Q7Z4</accession>
<proteinExistence type="inferred from homology"/>
<feature type="chain" id="PRO_1000097272" description="Lipoprotein signal peptidase">
    <location>
        <begin position="1"/>
        <end position="164"/>
    </location>
</feature>
<feature type="transmembrane region" description="Helical" evidence="1">
    <location>
        <begin position="6"/>
        <end position="26"/>
    </location>
</feature>
<feature type="transmembrane region" description="Helical" evidence="1">
    <location>
        <begin position="39"/>
        <end position="59"/>
    </location>
</feature>
<feature type="transmembrane region" description="Helical" evidence="1">
    <location>
        <begin position="65"/>
        <end position="85"/>
    </location>
</feature>
<feature type="transmembrane region" description="Helical" evidence="1">
    <location>
        <begin position="88"/>
        <end position="108"/>
    </location>
</feature>
<feature type="transmembrane region" description="Helical" evidence="1">
    <location>
        <begin position="141"/>
        <end position="161"/>
    </location>
</feature>
<feature type="active site" evidence="1">
    <location>
        <position position="118"/>
    </location>
</feature>
<feature type="active site" evidence="1">
    <location>
        <position position="140"/>
    </location>
</feature>
<gene>
    <name evidence="1" type="primary">lspA</name>
    <name type="ordered locus">Rpal_4860</name>
</gene>
<name>LSPA_RHOPT</name>
<evidence type="ECO:0000255" key="1">
    <source>
        <dbReference type="HAMAP-Rule" id="MF_00161"/>
    </source>
</evidence>
<reference key="1">
    <citation type="submission" date="2008-05" db="EMBL/GenBank/DDBJ databases">
        <title>Complete sequence of Rhodopseudomonas palustris TIE-1.</title>
        <authorList>
            <consortium name="US DOE Joint Genome Institute"/>
            <person name="Lucas S."/>
            <person name="Copeland A."/>
            <person name="Lapidus A."/>
            <person name="Glavina del Rio T."/>
            <person name="Dalin E."/>
            <person name="Tice H."/>
            <person name="Pitluck S."/>
            <person name="Chain P."/>
            <person name="Malfatti S."/>
            <person name="Shin M."/>
            <person name="Vergez L."/>
            <person name="Lang D."/>
            <person name="Schmutz J."/>
            <person name="Larimer F."/>
            <person name="Land M."/>
            <person name="Hauser L."/>
            <person name="Kyrpides N."/>
            <person name="Mikhailova N."/>
            <person name="Emerson D."/>
            <person name="Newman D.K."/>
            <person name="Roden E."/>
            <person name="Richardson P."/>
        </authorList>
    </citation>
    <scope>NUCLEOTIDE SEQUENCE [LARGE SCALE GENOMIC DNA]</scope>
    <source>
        <strain>TIE-1</strain>
    </source>
</reference>
<organism>
    <name type="scientific">Rhodopseudomonas palustris (strain TIE-1)</name>
    <dbReference type="NCBI Taxonomy" id="395960"/>
    <lineage>
        <taxon>Bacteria</taxon>
        <taxon>Pseudomonadati</taxon>
        <taxon>Pseudomonadota</taxon>
        <taxon>Alphaproteobacteria</taxon>
        <taxon>Hyphomicrobiales</taxon>
        <taxon>Nitrobacteraceae</taxon>
        <taxon>Rhodopseudomonas</taxon>
    </lineage>
</organism>